<protein>
    <recommendedName>
        <fullName>Beta-lactamase ROB-1</fullName>
        <ecNumber>3.5.2.6</ecNumber>
    </recommendedName>
</protein>
<proteinExistence type="inferred from homology"/>
<comment type="catalytic activity">
    <reaction evidence="3">
        <text>a beta-lactam + H2O = a substituted beta-amino acid</text>
        <dbReference type="Rhea" id="RHEA:20401"/>
        <dbReference type="ChEBI" id="CHEBI:15377"/>
        <dbReference type="ChEBI" id="CHEBI:35627"/>
        <dbReference type="ChEBI" id="CHEBI:140347"/>
        <dbReference type="EC" id="3.5.2.6"/>
    </reaction>
</comment>
<comment type="miscellaneous">
    <text evidence="5">The class A beta-lactamase family has a specific amino-acid numbering system, sometimes called Ambler or ABL numbering and often misspelt as Amber. A multiple sequence alignment was used to derive a consensus sequence and then the consensus was numbered taking into account insertions and deletions. This allows use of identical numbers, e.g. for active site residues, despite differences in protein length. UniProt always uses natural numbering of residues, hence there appear to be differences in numbering between this entry and some papers.</text>
</comment>
<comment type="similarity">
    <text evidence="4">Belongs to the class-A beta-lactamase family.</text>
</comment>
<accession>P67919</accession>
<accession>P33949</accession>
<organism>
    <name type="scientific">Mannheimia haemolytica</name>
    <name type="common">Pasteurella haemolytica</name>
    <dbReference type="NCBI Taxonomy" id="75985"/>
    <lineage>
        <taxon>Bacteria</taxon>
        <taxon>Pseudomonadati</taxon>
        <taxon>Pseudomonadota</taxon>
        <taxon>Gammaproteobacteria</taxon>
        <taxon>Pasteurellales</taxon>
        <taxon>Pasteurellaceae</taxon>
        <taxon>Mannheimia</taxon>
    </lineage>
</organism>
<reference key="1">
    <citation type="journal article" date="1991" name="Antimicrob. Agents Chemother.">
        <title>Sequence and molecular characterization of the ROB-1 beta-lactamase gene from Pasteurella haemolytica.</title>
        <authorList>
            <person name="Livrelli V."/>
            <person name="Peduzzi J."/>
            <person name="Joly B."/>
        </authorList>
    </citation>
    <scope>NUCLEOTIDE SEQUENCE [GENOMIC DNA]</scope>
    <source>
        <strain>LNPB 51</strain>
        <plasmid>RRob</plasmid>
    </source>
</reference>
<reference key="2">
    <citation type="journal article" date="1995" name="Res. Vet. Sci.">
        <title>A native plasmid of Pasteurella haemolytica serotype A1: DNA sequence analysis and investigation of its potential as a vector.</title>
        <authorList>
            <person name="Wood A.R."/>
            <person name="Lainson F.A."/>
            <person name="Wright F."/>
            <person name="Baird G.D."/>
            <person name="Donachie W."/>
        </authorList>
    </citation>
    <scope>NUCLEOTIDE SEQUENCE [GENOMIC DNA]</scope>
    <source>
        <strain>Serotype A1</strain>
        <plasmid>pAB2</plasmid>
    </source>
</reference>
<reference key="3">
    <citation type="journal article" date="1991" name="Biochem. J.">
        <title>A standard numbering scheme for the class A beta-lactamases.</title>
        <authorList>
            <person name="Ambler R.P."/>
            <person name="Coulson A.F."/>
            <person name="Frere J.M."/>
            <person name="Ghuysen J.M."/>
            <person name="Joris B."/>
            <person name="Forsman M."/>
            <person name="Levesque R.C."/>
            <person name="Tiraby G."/>
            <person name="Waley S.G."/>
        </authorList>
    </citation>
    <scope>AMINO ACID NUMBERING SCHEME</scope>
</reference>
<evidence type="ECO:0000250" key="1"/>
<evidence type="ECO:0000255" key="2"/>
<evidence type="ECO:0000255" key="3">
    <source>
        <dbReference type="PROSITE-ProRule" id="PRU10101"/>
    </source>
</evidence>
<evidence type="ECO:0000305" key="4"/>
<evidence type="ECO:0000305" key="5">
    <source>
    </source>
</evidence>
<gene>
    <name type="primary">rob1</name>
    <name type="synonym">bla</name>
</gene>
<keyword id="KW-0046">Antibiotic resistance</keyword>
<keyword id="KW-0378">Hydrolase</keyword>
<keyword id="KW-0614">Plasmid</keyword>
<keyword id="KW-0732">Signal</keyword>
<geneLocation type="plasmid">
    <name>RRob</name>
</geneLocation>
<geneLocation type="plasmid">
    <name>pAB2</name>
</geneLocation>
<sequence>MLNKLKIGTLLLLTLTACSPNSVHSVTSNPQPASAPVQQSATQATFQQTLANLEQQYQARIGVYVWDTETGHSLSYRADERFAYASTFKALLAGAVLQSLPEKDLNRTISYSQKDLVSYSPETQKYVGKGMTIAQLCEAAVRFSDNSATNLLLKELGGVEQYQRILRQLGDNVTHTNRLEPDLNQAKPNDIRDTSTPKQMAMNLNAYLLGNTLTESQKTILWNWLDNNATGNPLIRAATPTSWKVYDKSGAGKYGVRNDIAVVRIPNRKPIVMAIMSTQFTEEAKFNNKLVEDAAKQVFHTLQLN</sequence>
<dbReference type="EC" id="3.5.2.6"/>
<dbReference type="EMBL" id="X52872">
    <property type="protein sequence ID" value="CAA37052.1"/>
    <property type="molecule type" value="Genomic_DNA"/>
</dbReference>
<dbReference type="EMBL" id="Z21724">
    <property type="protein sequence ID" value="CAA79823.1"/>
    <property type="molecule type" value="Genomic_DNA"/>
</dbReference>
<dbReference type="PIR" id="A61156">
    <property type="entry name" value="A61156"/>
</dbReference>
<dbReference type="SMR" id="P67919"/>
<dbReference type="CARD" id="ARO:3002995">
    <property type="molecule name" value="ROB-1"/>
    <property type="mechanism identifier" value="ARO:0001004"/>
    <property type="mechanism name" value="antibiotic inactivation"/>
</dbReference>
<dbReference type="PATRIC" id="fig|75985.42.peg.2770"/>
<dbReference type="OrthoDB" id="9784149at2"/>
<dbReference type="GO" id="GO:0008800">
    <property type="term" value="F:beta-lactamase activity"/>
    <property type="evidence" value="ECO:0007669"/>
    <property type="project" value="UniProtKB-EC"/>
</dbReference>
<dbReference type="GO" id="GO:0030655">
    <property type="term" value="P:beta-lactam antibiotic catabolic process"/>
    <property type="evidence" value="ECO:0007669"/>
    <property type="project" value="InterPro"/>
</dbReference>
<dbReference type="GO" id="GO:0046677">
    <property type="term" value="P:response to antibiotic"/>
    <property type="evidence" value="ECO:0007669"/>
    <property type="project" value="UniProtKB-KW"/>
</dbReference>
<dbReference type="Gene3D" id="3.40.710.10">
    <property type="entry name" value="DD-peptidase/beta-lactamase superfamily"/>
    <property type="match status" value="1"/>
</dbReference>
<dbReference type="InterPro" id="IPR012338">
    <property type="entry name" value="Beta-lactam/transpept-like"/>
</dbReference>
<dbReference type="InterPro" id="IPR045155">
    <property type="entry name" value="Beta-lactam_cat"/>
</dbReference>
<dbReference type="InterPro" id="IPR000871">
    <property type="entry name" value="Beta-lactam_class-A"/>
</dbReference>
<dbReference type="InterPro" id="IPR023650">
    <property type="entry name" value="Beta-lactam_class-A_AS"/>
</dbReference>
<dbReference type="NCBIfam" id="NF033103">
    <property type="entry name" value="bla_class_A"/>
    <property type="match status" value="1"/>
</dbReference>
<dbReference type="NCBIfam" id="NF033568">
    <property type="entry name" value="blaROB"/>
    <property type="match status" value="1"/>
</dbReference>
<dbReference type="PANTHER" id="PTHR35333">
    <property type="entry name" value="BETA-LACTAMASE"/>
    <property type="match status" value="1"/>
</dbReference>
<dbReference type="PANTHER" id="PTHR35333:SF3">
    <property type="entry name" value="BETA-LACTAMASE-TYPE TRANSPEPTIDASE FOLD CONTAINING PROTEIN"/>
    <property type="match status" value="1"/>
</dbReference>
<dbReference type="Pfam" id="PF13354">
    <property type="entry name" value="Beta-lactamase2"/>
    <property type="match status" value="1"/>
</dbReference>
<dbReference type="PRINTS" id="PR00118">
    <property type="entry name" value="BLACTAMASEA"/>
</dbReference>
<dbReference type="SUPFAM" id="SSF56601">
    <property type="entry name" value="beta-lactamase/transpeptidase-like"/>
    <property type="match status" value="1"/>
</dbReference>
<dbReference type="PROSITE" id="PS00146">
    <property type="entry name" value="BETA_LACTAMASE_A"/>
    <property type="match status" value="1"/>
</dbReference>
<feature type="signal peptide" evidence="2">
    <location>
        <begin position="1"/>
        <end position="33"/>
    </location>
</feature>
<feature type="chain" id="PRO_0000017041" description="Beta-lactamase ROB-1">
    <location>
        <begin position="34"/>
        <end position="305"/>
    </location>
</feature>
<feature type="active site" description="Acyl-ester intermediate" evidence="3">
    <location>
        <position position="86"/>
    </location>
</feature>
<feature type="binding site" evidence="1">
    <location>
        <begin position="248"/>
        <end position="250"/>
    </location>
    <ligand>
        <name>substrate</name>
    </ligand>
</feature>
<name>BLA1_MANHA</name>